<comment type="function">
    <text>Endonuclease involved in group I intron homing. Recognizes and cleaves a 19-24 bp palindromic DNA site.</text>
</comment>
<comment type="cofactor">
    <cofactor evidence="1 3 5">
        <name>Mg(2+)</name>
        <dbReference type="ChEBI" id="CHEBI:18420"/>
    </cofactor>
    <cofactor evidence="1 3 5">
        <name>Mn(2+)</name>
        <dbReference type="ChEBI" id="CHEBI:29035"/>
    </cofactor>
    <cofactor evidence="1 3 5">
        <name>Co(2+)</name>
        <dbReference type="ChEBI" id="CHEBI:48828"/>
    </cofactor>
    <cofactor evidence="1 3 5">
        <name>Ni(2+)</name>
        <dbReference type="ChEBI" id="CHEBI:49786"/>
    </cofactor>
    <cofactor evidence="1 3 5">
        <name>Zn(2+)</name>
        <dbReference type="ChEBI" id="CHEBI:29105"/>
    </cofactor>
    <text evidence="1 3 5">Binds 3 Mg(2+) ions per homodimer. The enzyme can also utilize Mn(2+) or Co(2+), but has lower cleavage activity with Ni(2+) or Zn(2+). Ca(2+) Co(2+) give no enzyme activity.</text>
</comment>
<comment type="subunit">
    <text evidence="1 2 3 4 5 6 7">Homodimer.</text>
</comment>
<comment type="interaction">
    <interactant intactId="EBI-15738760">
        <id>P05725</id>
    </interactant>
    <interactant intactId="EBI-15738760">
        <id>P05725</id>
        <label>-</label>
    </interactant>
    <organismsDiffer>false</organismsDiffer>
    <experiments>5</experiments>
</comment>
<comment type="subcellular location">
    <subcellularLocation>
        <location>Plastid</location>
        <location>Chloroplast</location>
    </subcellularLocation>
</comment>
<comment type="similarity">
    <text evidence="8">Belongs to the LAGLIDADG endonuclease family.</text>
</comment>
<sequence>MNTKYNKEFLLYLAGFVDGDGSIIAQIKPNQSYKFKHQLSLTFQVTQKTQRRWFLDKLVDEIGVGYVRDRGSVSDYILSEIKPLHNFLTQLQPFLKLKQKQANLVLKIIEQLPSAKESPDKFLEVCTWVDQIAALNDSKTRKTTSETVRAVLDSLSEKKKSSP</sequence>
<feature type="chain" id="PRO_0000192783" description="DNA endonuclease I-CreI">
    <location>
        <begin position="1"/>
        <end position="163"/>
    </location>
</feature>
<feature type="region of interest" description="Interaction with DNA">
    <location>
        <begin position="26"/>
        <end position="38"/>
    </location>
</feature>
<feature type="region of interest" description="Interaction with DNA">
    <location>
        <begin position="44"/>
        <end position="47"/>
    </location>
</feature>
<feature type="region of interest" description="Interaction with DNA">
    <location>
        <begin position="68"/>
        <end position="70"/>
    </location>
</feature>
<feature type="region of interest" description="Interaction with DNA">
    <location>
        <begin position="138"/>
        <end position="143"/>
    </location>
</feature>
<feature type="binding site">
    <location>
        <position position="19"/>
    </location>
    <ligand>
        <name>Mg(2+)</name>
        <dbReference type="ChEBI" id="CHEBI:18420"/>
        <label>1</label>
    </ligand>
</feature>
<feature type="binding site">
    <location>
        <position position="20"/>
    </location>
    <ligand>
        <name>Mg(2+)</name>
        <dbReference type="ChEBI" id="CHEBI:18420"/>
        <label>1</label>
    </ligand>
</feature>
<feature type="binding site">
    <location>
        <position position="20"/>
    </location>
    <ligand>
        <name>Mg(2+)</name>
        <dbReference type="ChEBI" id="CHEBI:18420"/>
        <label>2</label>
        <note>ligand shared between dimeric partners</note>
    </ligand>
</feature>
<feature type="mutagenesis site" description="Loss of catalytic activity. Reduced affinity for DNA." evidence="5">
    <original>D</original>
    <variation>A</variation>
    <variation>L</variation>
    <variation>N</variation>
    <location>
        <position position="20"/>
    </location>
</feature>
<feature type="mutagenesis site" description="Alters the specificity of the endonuclease." evidence="4">
    <original>Q</original>
    <variation>A</variation>
    <variation>C</variation>
    <location>
        <position position="26"/>
    </location>
</feature>
<feature type="mutagenesis site" description="Alters the specificity of the endonuclease." evidence="4 6">
    <original>Y</original>
    <variation>C</variation>
    <variation>H</variation>
    <variation>R</variation>
    <location>
        <position position="33"/>
    </location>
</feature>
<feature type="mutagenesis site" description="Alters the specificity of the endonuclease." evidence="6">
    <original>Q</original>
    <variation>A</variation>
    <variation>C</variation>
    <variation>T</variation>
    <variation>V</variation>
    <variation>W</variation>
    <location>
        <position position="44"/>
    </location>
</feature>
<feature type="mutagenesis site" description="Loss of catalytic activity." evidence="5">
    <original>Q</original>
    <variation>A</variation>
    <variation>E</variation>
    <variation>M</variation>
    <location>
        <position position="47"/>
    </location>
</feature>
<feature type="mutagenesis site" description="Strongly reduced affinity for DNA. No effect on catalytic activity." evidence="5">
    <original>Q</original>
    <variation>N</variation>
    <location>
        <position position="47"/>
    </location>
</feature>
<feature type="mutagenesis site" description="Loss of activity." evidence="6">
    <original>R</original>
    <variation>A</variation>
    <location>
        <position position="68"/>
    </location>
</feature>
<feature type="mutagenesis site" description="Strongly reduced affinity for DNA. Increased catalytic activity." evidence="5">
    <original>K</original>
    <variation>A</variation>
    <location>
        <position position="98"/>
    </location>
</feature>
<feature type="mutagenesis site" description="Strongly reduced affinity for DNA. No effect on catalytic activity." evidence="5">
    <original>K</original>
    <variation>R</variation>
    <location>
        <position position="98"/>
    </location>
</feature>
<feature type="mutagenesis site" description="Reduced affinity for DNA. No effect on catalytic activity. Reduced cleavage; when associated with M-139." evidence="7">
    <original>S</original>
    <variation>A</variation>
    <location>
        <position position="138"/>
    </location>
</feature>
<feature type="mutagenesis site" description="Reduced affinity for DNA. No effect on catalytic activity. Reduced cleavage; when associated with A-138." evidence="7">
    <original>K</original>
    <variation>M</variation>
    <location>
        <position position="139"/>
    </location>
</feature>
<feature type="mutagenesis site" description="Reduced affinity for DNA. No effect on catalytic activity. Reduced cleavage; when associated with G-143." evidence="7">
    <original>K</original>
    <variation>G</variation>
    <location>
        <position position="142"/>
    </location>
</feature>
<feature type="mutagenesis site" description="Reduced affinity for DNA. No effect on catalytic activity. Reduced cleavage; when associated with G-142." evidence="7">
    <original>T</original>
    <variation>G</variation>
    <location>
        <position position="143"/>
    </location>
</feature>
<feature type="helix" evidence="9">
    <location>
        <begin position="7"/>
        <end position="20"/>
    </location>
</feature>
<feature type="strand" evidence="9">
    <location>
        <begin position="22"/>
        <end position="29"/>
    </location>
</feature>
<feature type="strand" evidence="10">
    <location>
        <begin position="31"/>
        <end position="33"/>
    </location>
</feature>
<feature type="strand" evidence="9">
    <location>
        <begin position="36"/>
        <end position="48"/>
    </location>
</feature>
<feature type="helix" evidence="9">
    <location>
        <begin position="49"/>
        <end position="51"/>
    </location>
</feature>
<feature type="helix" evidence="9">
    <location>
        <begin position="52"/>
        <end position="62"/>
    </location>
</feature>
<feature type="strand" evidence="9">
    <location>
        <begin position="66"/>
        <end position="70"/>
    </location>
</feature>
<feature type="strand" evidence="9">
    <location>
        <begin position="73"/>
        <end position="78"/>
    </location>
</feature>
<feature type="helix" evidence="9">
    <location>
        <begin position="81"/>
        <end position="91"/>
    </location>
</feature>
<feature type="helix" evidence="9">
    <location>
        <begin position="92"/>
        <end position="94"/>
    </location>
</feature>
<feature type="strand" evidence="9">
    <location>
        <begin position="96"/>
        <end position="98"/>
    </location>
</feature>
<feature type="helix" evidence="9">
    <location>
        <begin position="99"/>
        <end position="115"/>
    </location>
</feature>
<feature type="helix" evidence="9">
    <location>
        <begin position="119"/>
        <end position="135"/>
    </location>
</feature>
<feature type="helix" evidence="9">
    <location>
        <begin position="145"/>
        <end position="153"/>
    </location>
</feature>
<reference key="1">
    <citation type="journal article" date="1985" name="Nucleic Acids Res.">
        <title>The chloroplast ribosomal intron of Chlamydomonas reinhardtii codes for a polypeptide related to mitochondrial maturases.</title>
        <authorList>
            <person name="Rochaix J.-D."/>
            <person name="Rahire M."/>
            <person name="Michel F."/>
        </authorList>
    </citation>
    <scope>NUCLEOTIDE SEQUENCE [GENOMIC DNA]</scope>
</reference>
<reference key="2">
    <citation type="submission" date="2010-05" db="EMBL/GenBank/DDBJ databases">
        <authorList>
            <person name="Monnat R.J."/>
        </authorList>
    </citation>
    <scope>SEQUENCE REVISION TO 42; 110 AND 111</scope>
</reference>
<reference key="3">
    <citation type="journal article" date="1992" name="Gene">
        <title>Cleavage and recognition pattern of a double-strand-specific endonuclease (I-CreI) encoded by the chloroplast 23S rRNA intron of Chlamydomonas reinhardtii.</title>
        <authorList>
            <person name="Thompson A.J."/>
            <person name="Yuan X."/>
            <person name="Kudlicki W."/>
            <person name="Herin D.L."/>
        </authorList>
    </citation>
    <scope>CHARACTERIZATION</scope>
</reference>
<reference key="4">
    <citation type="journal article" date="1993" name="Mol. Gen. Genet.">
        <title>Characterization of the cleavage site and the recognition sequence of the I-CreI DNA endonuclease encoded by the chloroplast ribosomal intron of Chlamydomonas reinhardtii.</title>
        <authorList>
            <person name="Duerrenberger F."/>
            <person name="Rochaix J.-D."/>
        </authorList>
    </citation>
    <scope>CHARACTERIZATION</scope>
</reference>
<reference key="5">
    <citation type="journal article" date="1997" name="Nat. Struct. Biol.">
        <title>The structure of I-CreI, a group I intron-encoded homing endonuclease.</title>
        <authorList>
            <person name="Heath P.J."/>
            <person name="Stephens K.M."/>
            <person name="Monnat R.J. Jr."/>
            <person name="Stoddard B.L."/>
        </authorList>
    </citation>
    <scope>X-RAY CRYSTALLOGRAPHY (3.0 ANGSTROMS)</scope>
</reference>
<reference key="6">
    <citation type="journal article" date="2001" name="Nat. Struct. Biol.">
        <title>The homing endonuclease I-CreI uses three metals, one of which is shared between the two active sites.</title>
        <authorList>
            <person name="Chevalier B.S."/>
            <person name="Monnat R.J. Jr."/>
            <person name="Stoddard B.L."/>
        </authorList>
    </citation>
    <scope>X-RAY CRYSTALLOGRAPHY (1.8 ANGSTROMS) OF 2-153 IN COMPLEX WITH DIVALENT METAL CATIONS</scope>
    <scope>COFACTOR</scope>
    <scope>SUBUNIT</scope>
</reference>
<reference key="7">
    <citation type="journal article" date="2002" name="Mol. Cell">
        <title>Design, activity, and structure of a highly specific artificial endonuclease.</title>
        <authorList>
            <person name="Chevalier B.S."/>
            <person name="Kortemme T."/>
            <person name="Chadsey M.S."/>
            <person name="Baker D."/>
            <person name="Monnat R.J."/>
            <person name="Stoddard B.L."/>
        </authorList>
    </citation>
    <scope>X-RAY CRYSTALLOGRAPHY (2.4 ANGSTROMS) OF 9-163 IN COMPLEX WITH DNA AND DIVALENT METAL CATIONS</scope>
    <scope>SUBUNIT</scope>
    <scope>MUTAGENESIS</scope>
</reference>
<reference key="8">
    <citation type="journal article" date="2003" name="J. Mol. Biol.">
        <title>Flexible DNA target site recognition by divergent homing endonuclease isoschizomers I-CreI and I-MsoI.</title>
        <authorList>
            <person name="Chevalier B."/>
            <person name="Turmel M."/>
            <person name="Lemieux C."/>
            <person name="Monnat R.J. Jr."/>
            <person name="Stoddard B.L."/>
        </authorList>
    </citation>
    <scope>X-RAY CRYSTALLOGRAPHY (2.0 ANGSTROMS) IN COMPLEX WITH DIVALENT METAL CATIONS</scope>
    <scope>SUBUNIT</scope>
    <scope>COFACTOR</scope>
</reference>
<reference key="9">
    <citation type="journal article" date="2004" name="Biochemistry">
        <title>Metal-dependent DNA cleavage mechanism of the I-CreI LAGLIDADG homing endonuclease.</title>
        <authorList>
            <person name="Chevalier B."/>
            <person name="Sussman D."/>
            <person name="Otis C."/>
            <person name="Noel A.-J."/>
            <person name="Turmel M."/>
            <person name="Lemieux C."/>
            <person name="Stephens K."/>
            <person name="Monnat R.J. Jr."/>
            <person name="Stoddard B.L."/>
        </authorList>
    </citation>
    <scope>X-RAY CRYSTALLOGRAPHY (1.6 ANGSTROMS) OF MUTANTS ASN-20 AND GLU-47 IN COMPLEX WITH CALCIUM IONS AND DNA</scope>
    <scope>COFACTOR</scope>
    <scope>SUBUNIT</scope>
    <scope>MUTAGENESIS OF ASP-20; GLN-47 AND LYS-98</scope>
</reference>
<reference key="10">
    <citation type="journal article" date="2004" name="J. Mol. Biol.">
        <title>Isolation and characterization of new homing endonuclease specificities at individual target site positions.</title>
        <authorList>
            <person name="Sussman D."/>
            <person name="Chadsey M."/>
            <person name="Fauce S."/>
            <person name="Engel A."/>
            <person name="Bruett A."/>
            <person name="Monnat R. Jr."/>
            <person name="Stoddard B.L."/>
            <person name="Seligman L.M."/>
        </authorList>
    </citation>
    <scope>X-RAY CRYSTALLOGRAPHY (2.5 ANGSTROMS) IN COMPLEX WITH DNA</scope>
    <scope>SUBUNIT</scope>
    <scope>MUTAGENESIS OF GLN-26 AND TYR-33</scope>
</reference>
<reference key="11">
    <citation type="journal article" date="2006" name="Nucleic Acids Res.">
        <title>Homing endonuclease I-CreI derivatives with novel DNA target specificities.</title>
        <authorList>
            <person name="Rosen L.E."/>
            <person name="Morrison H.A."/>
            <person name="Masri S."/>
            <person name="Brown M.J."/>
            <person name="Springstubb B."/>
            <person name="Sussman D."/>
            <person name="Stoddard B.L."/>
            <person name="Seligman L.M."/>
        </authorList>
    </citation>
    <scope>X-RAY CRYSTALLOGRAPHY (2.3 ANGSTROMS) OF 1-153 IN COMPLEX WITH DNA</scope>
    <scope>SUBUNIT</scope>
    <scope>MUTAGENESIS OF TYR-33; GLN-44 AND ARG-68</scope>
</reference>
<reference key="12">
    <citation type="journal article" date="2007" name="Nucleic Acids Res.">
        <title>The C-terminal loop of the homing endonuclease I-CreI is essential for site recognition, DNA binding and cleavage.</title>
        <authorList>
            <person name="Prieto J."/>
            <person name="Redondo P."/>
            <person name="Padro D."/>
            <person name="Arnould S."/>
            <person name="Epinat J.-C."/>
            <person name="Paques F."/>
            <person name="Blanco F.J."/>
            <person name="Montoya G."/>
        </authorList>
    </citation>
    <scope>X-RAY CRYSTALLOGRAPHY (2.0 ANGSTROMS) OF 1-156 IN COMPLEX WITH DNA</scope>
    <scope>SUBUNIT</scope>
    <scope>MUTAGENESIS OF SER-138; LYS-139; LYS-142 AND THR-143</scope>
</reference>
<name>DNE1_CHLRE</name>
<accession>P05725</accession>
<proteinExistence type="evidence at protein level"/>
<geneLocation type="chloroplast"/>
<evidence type="ECO:0000269" key="1">
    <source>
    </source>
</evidence>
<evidence type="ECO:0000269" key="2">
    <source>
    </source>
</evidence>
<evidence type="ECO:0000269" key="3">
    <source>
    </source>
</evidence>
<evidence type="ECO:0000269" key="4">
    <source>
    </source>
</evidence>
<evidence type="ECO:0000269" key="5">
    <source>
    </source>
</evidence>
<evidence type="ECO:0000269" key="6">
    <source>
    </source>
</evidence>
<evidence type="ECO:0000269" key="7">
    <source>
    </source>
</evidence>
<evidence type="ECO:0000305" key="8"/>
<evidence type="ECO:0007829" key="9">
    <source>
        <dbReference type="PDB" id="1T9I"/>
    </source>
</evidence>
<evidence type="ECO:0007829" key="10">
    <source>
        <dbReference type="PDB" id="1U0D"/>
    </source>
</evidence>
<dbReference type="EC" id="3.1.-.-"/>
<dbReference type="EMBL" id="X01977">
    <property type="protein sequence ID" value="CAA26008.2"/>
    <property type="molecule type" value="Genomic_DNA"/>
</dbReference>
<dbReference type="PIR" id="A23091">
    <property type="entry name" value="A23091"/>
</dbReference>
<dbReference type="PDB" id="1AF5">
    <property type="method" value="X-ray"/>
    <property type="resolution" value="3.00 A"/>
    <property type="chains" value="A=4-138"/>
</dbReference>
<dbReference type="PDB" id="1BP7">
    <property type="method" value="X-ray"/>
    <property type="resolution" value="3.00 A"/>
    <property type="chains" value="A/B/C/D=2-153"/>
</dbReference>
<dbReference type="PDB" id="1G9Y">
    <property type="method" value="X-ray"/>
    <property type="resolution" value="2.05 A"/>
    <property type="chains" value="A/B=2-153"/>
</dbReference>
<dbReference type="PDB" id="1G9Z">
    <property type="method" value="X-ray"/>
    <property type="resolution" value="1.80 A"/>
    <property type="chains" value="A/B=2-153"/>
</dbReference>
<dbReference type="PDB" id="1MOW">
    <property type="method" value="X-ray"/>
    <property type="resolution" value="2.40 A"/>
    <property type="chains" value="A/D/G/J=17-163"/>
</dbReference>
<dbReference type="PDB" id="1N3E">
    <property type="method" value="X-ray"/>
    <property type="resolution" value="2.50 A"/>
    <property type="chains" value="A/B/G/H=1-163"/>
</dbReference>
<dbReference type="PDB" id="1N3F">
    <property type="method" value="X-ray"/>
    <property type="resolution" value="2.00 A"/>
    <property type="chains" value="A/B/G/H=1-163"/>
</dbReference>
<dbReference type="PDB" id="1T9I">
    <property type="method" value="X-ray"/>
    <property type="resolution" value="1.60 A"/>
    <property type="chains" value="A/B=1-163"/>
</dbReference>
<dbReference type="PDB" id="1T9J">
    <property type="method" value="X-ray"/>
    <property type="resolution" value="2.00 A"/>
    <property type="chains" value="A/B=1-163"/>
</dbReference>
<dbReference type="PDB" id="1U0C">
    <property type="method" value="X-ray"/>
    <property type="resolution" value="2.50 A"/>
    <property type="chains" value="A/B=1-163"/>
</dbReference>
<dbReference type="PDB" id="1U0D">
    <property type="method" value="X-ray"/>
    <property type="resolution" value="2.90 A"/>
    <property type="chains" value="A/B=1-163"/>
</dbReference>
<dbReference type="PDB" id="2I3P">
    <property type="method" value="X-ray"/>
    <property type="resolution" value="2.30 A"/>
    <property type="chains" value="A/B=1-153"/>
</dbReference>
<dbReference type="PDB" id="2I3Q">
    <property type="method" value="X-ray"/>
    <property type="resolution" value="2.30 A"/>
    <property type="chains" value="A/B=1-153"/>
</dbReference>
<dbReference type="PDB" id="2O7M">
    <property type="method" value="X-ray"/>
    <property type="resolution" value="2.00 A"/>
    <property type="chains" value="A/B=1-156"/>
</dbReference>
<dbReference type="PDB" id="2VBJ">
    <property type="method" value="X-ray"/>
    <property type="resolution" value="1.95 A"/>
    <property type="chains" value="A/B=2-153"/>
</dbReference>
<dbReference type="PDB" id="2VBL">
    <property type="method" value="X-ray"/>
    <property type="resolution" value="1.80 A"/>
    <property type="chains" value="A/B=1-153"/>
</dbReference>
<dbReference type="PDB" id="2VBN">
    <property type="method" value="X-ray"/>
    <property type="resolution" value="1.90 A"/>
    <property type="chains" value="A/B=1-153"/>
</dbReference>
<dbReference type="PDB" id="2VBO">
    <property type="method" value="X-ray"/>
    <property type="resolution" value="1.80 A"/>
    <property type="chains" value="A/B=1-153"/>
</dbReference>
<dbReference type="PDB" id="4AAB">
    <property type="method" value="X-ray"/>
    <property type="resolution" value="2.50 A"/>
    <property type="chains" value="A/B=2-153"/>
</dbReference>
<dbReference type="PDB" id="4AAD">
    <property type="method" value="X-ray"/>
    <property type="resolution" value="3.10 A"/>
    <property type="chains" value="A/B=2-153"/>
</dbReference>
<dbReference type="PDB" id="4AAE">
    <property type="method" value="X-ray"/>
    <property type="resolution" value="2.60 A"/>
    <property type="chains" value="A/B=2-154"/>
</dbReference>
<dbReference type="PDB" id="4AAF">
    <property type="method" value="X-ray"/>
    <property type="resolution" value="2.50 A"/>
    <property type="chains" value="A/B=2-153"/>
</dbReference>
<dbReference type="PDB" id="4AAG">
    <property type="method" value="X-ray"/>
    <property type="resolution" value="2.80 A"/>
    <property type="chains" value="A/B=2-153"/>
</dbReference>
<dbReference type="PDB" id="4AQU">
    <property type="method" value="X-ray"/>
    <property type="resolution" value="2.30 A"/>
    <property type="chains" value="A/B=2-153"/>
</dbReference>
<dbReference type="PDB" id="4AQX">
    <property type="method" value="X-ray"/>
    <property type="resolution" value="2.20 A"/>
    <property type="chains" value="A/B=2-153"/>
</dbReference>
<dbReference type="PDB" id="6FB0">
    <property type="method" value="X-ray"/>
    <property type="resolution" value="2.15 A"/>
    <property type="chains" value="A=2-154, B=2-155"/>
</dbReference>
<dbReference type="PDB" id="6FB1">
    <property type="method" value="X-ray"/>
    <property type="resolution" value="3.02 A"/>
    <property type="chains" value="A/B=2-155"/>
</dbReference>
<dbReference type="PDB" id="6FB2">
    <property type="method" value="X-ray"/>
    <property type="resolution" value="2.95 A"/>
    <property type="chains" value="A=2-154, B=2-155"/>
</dbReference>
<dbReference type="PDB" id="6FB5">
    <property type="method" value="X-ray"/>
    <property type="resolution" value="2.20 A"/>
    <property type="chains" value="A=2-154, B=2-155"/>
</dbReference>
<dbReference type="PDB" id="6FB6">
    <property type="method" value="X-ray"/>
    <property type="resolution" value="2.60 A"/>
    <property type="chains" value="A=2-154, B=2-155"/>
</dbReference>
<dbReference type="PDB" id="6FB7">
    <property type="method" value="X-ray"/>
    <property type="resolution" value="2.69 A"/>
    <property type="chains" value="A/B=2-153"/>
</dbReference>
<dbReference type="PDB" id="6FB8">
    <property type="method" value="X-ray"/>
    <property type="resolution" value="2.45 A"/>
    <property type="chains" value="A/B=2-153"/>
</dbReference>
<dbReference type="PDB" id="6FB9">
    <property type="method" value="X-ray"/>
    <property type="resolution" value="2.95 A"/>
    <property type="chains" value="A/B=2-153"/>
</dbReference>
<dbReference type="PDBsum" id="1AF5"/>
<dbReference type="PDBsum" id="1BP7"/>
<dbReference type="PDBsum" id="1G9Y"/>
<dbReference type="PDBsum" id="1G9Z"/>
<dbReference type="PDBsum" id="1MOW"/>
<dbReference type="PDBsum" id="1N3E"/>
<dbReference type="PDBsum" id="1N3F"/>
<dbReference type="PDBsum" id="1T9I"/>
<dbReference type="PDBsum" id="1T9J"/>
<dbReference type="PDBsum" id="1U0C"/>
<dbReference type="PDBsum" id="1U0D"/>
<dbReference type="PDBsum" id="2I3P"/>
<dbReference type="PDBsum" id="2I3Q"/>
<dbReference type="PDBsum" id="2O7M"/>
<dbReference type="PDBsum" id="2VBJ"/>
<dbReference type="PDBsum" id="2VBL"/>
<dbReference type="PDBsum" id="2VBN"/>
<dbReference type="PDBsum" id="2VBO"/>
<dbReference type="PDBsum" id="4AAB"/>
<dbReference type="PDBsum" id="4AAD"/>
<dbReference type="PDBsum" id="4AAE"/>
<dbReference type="PDBsum" id="4AAF"/>
<dbReference type="PDBsum" id="4AAG"/>
<dbReference type="PDBsum" id="4AQU"/>
<dbReference type="PDBsum" id="4AQX"/>
<dbReference type="PDBsum" id="6FB0"/>
<dbReference type="PDBsum" id="6FB1"/>
<dbReference type="PDBsum" id="6FB2"/>
<dbReference type="PDBsum" id="6FB5"/>
<dbReference type="PDBsum" id="6FB6"/>
<dbReference type="PDBsum" id="6FB7"/>
<dbReference type="PDBsum" id="6FB8"/>
<dbReference type="PDBsum" id="6FB9"/>
<dbReference type="SMR" id="P05725"/>
<dbReference type="DIP" id="DIP-59771N"/>
<dbReference type="REBASE" id="2540">
    <property type="entry name" value="I-CreI"/>
</dbReference>
<dbReference type="EvolutionaryTrace" id="P05725"/>
<dbReference type="GO" id="GO:0009507">
    <property type="term" value="C:chloroplast"/>
    <property type="evidence" value="ECO:0007669"/>
    <property type="project" value="UniProtKB-SubCell"/>
</dbReference>
<dbReference type="GO" id="GO:0004519">
    <property type="term" value="F:endonuclease activity"/>
    <property type="evidence" value="ECO:0007669"/>
    <property type="project" value="UniProtKB-KW"/>
</dbReference>
<dbReference type="GO" id="GO:0042802">
    <property type="term" value="F:identical protein binding"/>
    <property type="evidence" value="ECO:0000353"/>
    <property type="project" value="IntAct"/>
</dbReference>
<dbReference type="GO" id="GO:0046872">
    <property type="term" value="F:metal ion binding"/>
    <property type="evidence" value="ECO:0007669"/>
    <property type="project" value="UniProtKB-KW"/>
</dbReference>
<dbReference type="GO" id="GO:0006314">
    <property type="term" value="P:intron homing"/>
    <property type="evidence" value="ECO:0007669"/>
    <property type="project" value="UniProtKB-KW"/>
</dbReference>
<dbReference type="Gene3D" id="3.10.28.10">
    <property type="entry name" value="Homing endonucleases"/>
    <property type="match status" value="1"/>
</dbReference>
<dbReference type="InterPro" id="IPR027434">
    <property type="entry name" value="Homing_endonucl"/>
</dbReference>
<dbReference type="InterPro" id="IPR004860">
    <property type="entry name" value="LAGLIDADG_dom"/>
</dbReference>
<dbReference type="Pfam" id="PF00961">
    <property type="entry name" value="LAGLIDADG_1"/>
    <property type="match status" value="1"/>
</dbReference>
<dbReference type="SUPFAM" id="SSF55608">
    <property type="entry name" value="Homing endonucleases"/>
    <property type="match status" value="1"/>
</dbReference>
<protein>
    <recommendedName>
        <fullName>DNA endonuclease I-CreI</fullName>
        <ecNumber>3.1.-.-</ecNumber>
    </recommendedName>
    <alternativeName>
        <fullName>23S rRNA intron protein</fullName>
    </alternativeName>
</protein>
<keyword id="KW-0002">3D-structure</keyword>
<keyword id="KW-0150">Chloroplast</keyword>
<keyword id="KW-0255">Endonuclease</keyword>
<keyword id="KW-0378">Hydrolase</keyword>
<keyword id="KW-0404">Intron homing</keyword>
<keyword id="KW-0460">Magnesium</keyword>
<keyword id="KW-0479">Metal-binding</keyword>
<keyword id="KW-0540">Nuclease</keyword>
<keyword id="KW-0934">Plastid</keyword>
<organism>
    <name type="scientific">Chlamydomonas reinhardtii</name>
    <name type="common">Chlamydomonas smithii</name>
    <dbReference type="NCBI Taxonomy" id="3055"/>
    <lineage>
        <taxon>Eukaryota</taxon>
        <taxon>Viridiplantae</taxon>
        <taxon>Chlorophyta</taxon>
        <taxon>core chlorophytes</taxon>
        <taxon>Chlorophyceae</taxon>
        <taxon>CS clade</taxon>
        <taxon>Chlamydomonadales</taxon>
        <taxon>Chlamydomonadaceae</taxon>
        <taxon>Chlamydomonas</taxon>
    </lineage>
</organism>